<name>LYSET_MOUSE</name>
<keyword id="KW-0333">Golgi apparatus</keyword>
<keyword id="KW-0472">Membrane</keyword>
<keyword id="KW-1185">Reference proteome</keyword>
<keyword id="KW-0812">Transmembrane</keyword>
<keyword id="KW-1133">Transmembrane helix</keyword>
<protein>
    <recommendedName>
        <fullName>Lysosomal enzyme trafficking factor</fullName>
    </recommendedName>
    <alternativeName>
        <fullName>Transmembrane protein 251</fullName>
    </alternativeName>
</protein>
<feature type="chain" id="PRO_0000089917" description="Lysosomal enzyme trafficking factor">
    <location>
        <begin position="1"/>
        <end position="163"/>
    </location>
</feature>
<feature type="transmembrane region" description="Helical" evidence="2">
    <location>
        <begin position="40"/>
        <end position="60"/>
    </location>
</feature>
<feature type="transmembrane region" description="Helical" evidence="2">
    <location>
        <begin position="98"/>
        <end position="118"/>
    </location>
</feature>
<accession>Q8BH26</accession>
<sequence>MPKAPDCSELSDSCSLAGGTGRFSGPLHRAWRMMNFRQRMGWIGVGLYLLASAAAFYYVFEINETYNRLALEHILQHPEEPREGTTWTHSLKARLLSLPFWLWTIIFLIPYLQMFLFLYSCTRADPKTVGYCIIPICLAVICNRHQAFVKASNQISRLQLIDT</sequence>
<proteinExistence type="evidence at transcript level"/>
<dbReference type="EMBL" id="AK032513">
    <property type="protein sequence ID" value="BAC27904.1"/>
    <property type="molecule type" value="mRNA"/>
</dbReference>
<dbReference type="EMBL" id="AK052027">
    <property type="protein sequence ID" value="BAC34834.1"/>
    <property type="molecule type" value="mRNA"/>
</dbReference>
<dbReference type="EMBL" id="BC096606">
    <property type="protein sequence ID" value="AAH96606.1"/>
    <property type="molecule type" value="mRNA"/>
</dbReference>
<dbReference type="CCDS" id="CCDS49146.1"/>
<dbReference type="RefSeq" id="NP_001311444.1">
    <property type="nucleotide sequence ID" value="NM_001324515.1"/>
</dbReference>
<dbReference type="RefSeq" id="NP_796114.1">
    <property type="nucleotide sequence ID" value="NM_177140.5"/>
</dbReference>
<dbReference type="FunCoup" id="Q8BH26">
    <property type="interactions" value="373"/>
</dbReference>
<dbReference type="STRING" id="10090.ENSMUSP00000054611"/>
<dbReference type="SwissPalm" id="Q8BH26"/>
<dbReference type="PaxDb" id="10090-ENSMUSP00000054611"/>
<dbReference type="ProteomicsDB" id="259107"/>
<dbReference type="Pumba" id="Q8BH26"/>
<dbReference type="Antibodypedia" id="64066">
    <property type="antibodies" value="5 antibodies from 5 providers"/>
</dbReference>
<dbReference type="DNASU" id="320351"/>
<dbReference type="Ensembl" id="ENSMUST00000057416.8">
    <property type="protein sequence ID" value="ENSMUSP00000054611.7"/>
    <property type="gene ID" value="ENSMUSG00000046675.8"/>
</dbReference>
<dbReference type="GeneID" id="320351"/>
<dbReference type="KEGG" id="mmu:320351"/>
<dbReference type="UCSC" id="uc007oul.1">
    <property type="organism name" value="mouse"/>
</dbReference>
<dbReference type="AGR" id="MGI:2443862"/>
<dbReference type="CTD" id="26175"/>
<dbReference type="MGI" id="MGI:2443862">
    <property type="gene designation" value="Lyset"/>
</dbReference>
<dbReference type="VEuPathDB" id="HostDB:ENSMUSG00000046675"/>
<dbReference type="eggNOG" id="ENOG502RY2J">
    <property type="taxonomic scope" value="Eukaryota"/>
</dbReference>
<dbReference type="GeneTree" id="ENSGT00390000007473"/>
<dbReference type="HOGENOM" id="CLU_133007_0_0_1"/>
<dbReference type="InParanoid" id="Q8BH26"/>
<dbReference type="OMA" id="AYYIFEV"/>
<dbReference type="OrthoDB" id="6273523at2759"/>
<dbReference type="PhylomeDB" id="Q8BH26"/>
<dbReference type="TreeFam" id="TF332722"/>
<dbReference type="BioGRID-ORCS" id="320351">
    <property type="hits" value="6 hits in 76 CRISPR screens"/>
</dbReference>
<dbReference type="ChiTaRS" id="Tmem251">
    <property type="organism name" value="mouse"/>
</dbReference>
<dbReference type="PRO" id="PR:Q8BH26"/>
<dbReference type="Proteomes" id="UP000000589">
    <property type="component" value="Chromosome 12"/>
</dbReference>
<dbReference type="RNAct" id="Q8BH26">
    <property type="molecule type" value="protein"/>
</dbReference>
<dbReference type="Bgee" id="ENSMUSG00000046675">
    <property type="expression patterns" value="Expressed in peripheral nervous system and 77 other cell types or tissues"/>
</dbReference>
<dbReference type="GO" id="GO:0005794">
    <property type="term" value="C:Golgi apparatus"/>
    <property type="evidence" value="ECO:0000353"/>
    <property type="project" value="MGI"/>
</dbReference>
<dbReference type="GO" id="GO:0031985">
    <property type="term" value="C:Golgi cisterna"/>
    <property type="evidence" value="ECO:0007669"/>
    <property type="project" value="Ensembl"/>
</dbReference>
<dbReference type="GO" id="GO:0000139">
    <property type="term" value="C:Golgi membrane"/>
    <property type="evidence" value="ECO:0007669"/>
    <property type="project" value="UniProtKB-SubCell"/>
</dbReference>
<dbReference type="GO" id="GO:0046907">
    <property type="term" value="P:intracellular transport"/>
    <property type="evidence" value="ECO:0000315"/>
    <property type="project" value="MGI"/>
</dbReference>
<dbReference type="GO" id="GO:0007040">
    <property type="term" value="P:lysosome organization"/>
    <property type="evidence" value="ECO:0000315"/>
    <property type="project" value="MGI"/>
</dbReference>
<dbReference type="GO" id="GO:0030163">
    <property type="term" value="P:protein catabolic process"/>
    <property type="evidence" value="ECO:0000315"/>
    <property type="project" value="MGI"/>
</dbReference>
<dbReference type="GO" id="GO:0006622">
    <property type="term" value="P:protein targeting to lysosome"/>
    <property type="evidence" value="ECO:0000315"/>
    <property type="project" value="MGI"/>
</dbReference>
<dbReference type="GO" id="GO:0031647">
    <property type="term" value="P:regulation of protein stability"/>
    <property type="evidence" value="ECO:0000315"/>
    <property type="project" value="MGI"/>
</dbReference>
<dbReference type="GO" id="GO:0060627">
    <property type="term" value="P:regulation of vesicle-mediated transport"/>
    <property type="evidence" value="ECO:0000250"/>
    <property type="project" value="UniProtKB"/>
</dbReference>
<dbReference type="GO" id="GO:0009615">
    <property type="term" value="P:response to virus"/>
    <property type="evidence" value="ECO:0000315"/>
    <property type="project" value="MGI"/>
</dbReference>
<dbReference type="InterPro" id="IPR028024">
    <property type="entry name" value="LYSET"/>
</dbReference>
<dbReference type="PANTHER" id="PTHR31925:SF1">
    <property type="entry name" value="LYSOSOMAL ENZYME TRAFFICKING FACTOR"/>
    <property type="match status" value="1"/>
</dbReference>
<dbReference type="PANTHER" id="PTHR31925">
    <property type="entry name" value="TRANSMEMBRANE PROTEIN 251"/>
    <property type="match status" value="1"/>
</dbReference>
<dbReference type="Pfam" id="PF15190">
    <property type="entry name" value="TMEM251"/>
    <property type="match status" value="1"/>
</dbReference>
<gene>
    <name type="primary">Lyset</name>
    <name type="synonym">C14orf109</name>
    <name type="synonym">Tmem251</name>
</gene>
<organism>
    <name type="scientific">Mus musculus</name>
    <name type="common">Mouse</name>
    <dbReference type="NCBI Taxonomy" id="10090"/>
    <lineage>
        <taxon>Eukaryota</taxon>
        <taxon>Metazoa</taxon>
        <taxon>Chordata</taxon>
        <taxon>Craniata</taxon>
        <taxon>Vertebrata</taxon>
        <taxon>Euteleostomi</taxon>
        <taxon>Mammalia</taxon>
        <taxon>Eutheria</taxon>
        <taxon>Euarchontoglires</taxon>
        <taxon>Glires</taxon>
        <taxon>Rodentia</taxon>
        <taxon>Myomorpha</taxon>
        <taxon>Muroidea</taxon>
        <taxon>Muridae</taxon>
        <taxon>Murinae</taxon>
        <taxon>Mus</taxon>
        <taxon>Mus</taxon>
    </lineage>
</organism>
<evidence type="ECO:0000250" key="1">
    <source>
        <dbReference type="UniProtKB" id="Q8N6I4"/>
    </source>
</evidence>
<evidence type="ECO:0000255" key="2"/>
<evidence type="ECO:0000269" key="3">
    <source>
    </source>
</evidence>
<evidence type="ECO:0000305" key="4"/>
<comment type="function">
    <text evidence="1 3">Required for mannose-6-phosphate-dependent trafficking of lysosomal enzymes. LYSET bridges GlcNAc-1-phosphate transferase (GNPTAB), to the membrane-bound transcription factor site-1 protease (MBTPS1), thus allowing proteolytic activation of the GNPTAB. GNPTAB is involved in the regulation of M6P-dependent Golgi-to-lysosome trafficking of lysosomal enzymes. LYSET is thus an essential factor for maturation and delivery of lysosomal hydrolases (By similarity). Plays an essential function for cells that depend on lysosomal catabolism to generate nutrients (PubMed:36074821).</text>
</comment>
<comment type="subunit">
    <text evidence="1">Interacts with GNPTAB; this interaction is important for proper localization of GNPTAB in Golgi stacks. Interacts with MBTPS1.</text>
</comment>
<comment type="subcellular location">
    <subcellularLocation>
        <location evidence="1">Golgi apparatus membrane</location>
        <topology evidence="2">Multi-pass membrane protein</topology>
    </subcellularLocation>
    <text evidence="1">Colocalizes with GNPTAB and GNPTG in Golgi apparatus cisternae.</text>
</comment>
<comment type="disruption phenotype">
    <text evidence="3">LYSET knockout mice display increased lysosomal enzyme serum levels and storage materials in lysosomes. In addition, LYSET KO embryonic fibroblasts are resistant to infection by EBOV glycoprotein (VSV-EBOV).</text>
</comment>
<comment type="similarity">
    <text evidence="4">Belongs to the LYSET family.</text>
</comment>
<reference key="1">
    <citation type="journal article" date="2005" name="Science">
        <title>The transcriptional landscape of the mammalian genome.</title>
        <authorList>
            <person name="Carninci P."/>
            <person name="Kasukawa T."/>
            <person name="Katayama S."/>
            <person name="Gough J."/>
            <person name="Frith M.C."/>
            <person name="Maeda N."/>
            <person name="Oyama R."/>
            <person name="Ravasi T."/>
            <person name="Lenhard B."/>
            <person name="Wells C."/>
            <person name="Kodzius R."/>
            <person name="Shimokawa K."/>
            <person name="Bajic V.B."/>
            <person name="Brenner S.E."/>
            <person name="Batalov S."/>
            <person name="Forrest A.R."/>
            <person name="Zavolan M."/>
            <person name="Davis M.J."/>
            <person name="Wilming L.G."/>
            <person name="Aidinis V."/>
            <person name="Allen J.E."/>
            <person name="Ambesi-Impiombato A."/>
            <person name="Apweiler R."/>
            <person name="Aturaliya R.N."/>
            <person name="Bailey T.L."/>
            <person name="Bansal M."/>
            <person name="Baxter L."/>
            <person name="Beisel K.W."/>
            <person name="Bersano T."/>
            <person name="Bono H."/>
            <person name="Chalk A.M."/>
            <person name="Chiu K.P."/>
            <person name="Choudhary V."/>
            <person name="Christoffels A."/>
            <person name="Clutterbuck D.R."/>
            <person name="Crowe M.L."/>
            <person name="Dalla E."/>
            <person name="Dalrymple B.P."/>
            <person name="de Bono B."/>
            <person name="Della Gatta G."/>
            <person name="di Bernardo D."/>
            <person name="Down T."/>
            <person name="Engstrom P."/>
            <person name="Fagiolini M."/>
            <person name="Faulkner G."/>
            <person name="Fletcher C.F."/>
            <person name="Fukushima T."/>
            <person name="Furuno M."/>
            <person name="Futaki S."/>
            <person name="Gariboldi M."/>
            <person name="Georgii-Hemming P."/>
            <person name="Gingeras T.R."/>
            <person name="Gojobori T."/>
            <person name="Green R.E."/>
            <person name="Gustincich S."/>
            <person name="Harbers M."/>
            <person name="Hayashi Y."/>
            <person name="Hensch T.K."/>
            <person name="Hirokawa N."/>
            <person name="Hill D."/>
            <person name="Huminiecki L."/>
            <person name="Iacono M."/>
            <person name="Ikeo K."/>
            <person name="Iwama A."/>
            <person name="Ishikawa T."/>
            <person name="Jakt M."/>
            <person name="Kanapin A."/>
            <person name="Katoh M."/>
            <person name="Kawasawa Y."/>
            <person name="Kelso J."/>
            <person name="Kitamura H."/>
            <person name="Kitano H."/>
            <person name="Kollias G."/>
            <person name="Krishnan S.P."/>
            <person name="Kruger A."/>
            <person name="Kummerfeld S.K."/>
            <person name="Kurochkin I.V."/>
            <person name="Lareau L.F."/>
            <person name="Lazarevic D."/>
            <person name="Lipovich L."/>
            <person name="Liu J."/>
            <person name="Liuni S."/>
            <person name="McWilliam S."/>
            <person name="Madan Babu M."/>
            <person name="Madera M."/>
            <person name="Marchionni L."/>
            <person name="Matsuda H."/>
            <person name="Matsuzawa S."/>
            <person name="Miki H."/>
            <person name="Mignone F."/>
            <person name="Miyake S."/>
            <person name="Morris K."/>
            <person name="Mottagui-Tabar S."/>
            <person name="Mulder N."/>
            <person name="Nakano N."/>
            <person name="Nakauchi H."/>
            <person name="Ng P."/>
            <person name="Nilsson R."/>
            <person name="Nishiguchi S."/>
            <person name="Nishikawa S."/>
            <person name="Nori F."/>
            <person name="Ohara O."/>
            <person name="Okazaki Y."/>
            <person name="Orlando V."/>
            <person name="Pang K.C."/>
            <person name="Pavan W.J."/>
            <person name="Pavesi G."/>
            <person name="Pesole G."/>
            <person name="Petrovsky N."/>
            <person name="Piazza S."/>
            <person name="Reed J."/>
            <person name="Reid J.F."/>
            <person name="Ring B.Z."/>
            <person name="Ringwald M."/>
            <person name="Rost B."/>
            <person name="Ruan Y."/>
            <person name="Salzberg S.L."/>
            <person name="Sandelin A."/>
            <person name="Schneider C."/>
            <person name="Schoenbach C."/>
            <person name="Sekiguchi K."/>
            <person name="Semple C.A."/>
            <person name="Seno S."/>
            <person name="Sessa L."/>
            <person name="Sheng Y."/>
            <person name="Shibata Y."/>
            <person name="Shimada H."/>
            <person name="Shimada K."/>
            <person name="Silva D."/>
            <person name="Sinclair B."/>
            <person name="Sperling S."/>
            <person name="Stupka E."/>
            <person name="Sugiura K."/>
            <person name="Sultana R."/>
            <person name="Takenaka Y."/>
            <person name="Taki K."/>
            <person name="Tammoja K."/>
            <person name="Tan S.L."/>
            <person name="Tang S."/>
            <person name="Taylor M.S."/>
            <person name="Tegner J."/>
            <person name="Teichmann S.A."/>
            <person name="Ueda H.R."/>
            <person name="van Nimwegen E."/>
            <person name="Verardo R."/>
            <person name="Wei C.L."/>
            <person name="Yagi K."/>
            <person name="Yamanishi H."/>
            <person name="Zabarovsky E."/>
            <person name="Zhu S."/>
            <person name="Zimmer A."/>
            <person name="Hide W."/>
            <person name="Bult C."/>
            <person name="Grimmond S.M."/>
            <person name="Teasdale R.D."/>
            <person name="Liu E.T."/>
            <person name="Brusic V."/>
            <person name="Quackenbush J."/>
            <person name="Wahlestedt C."/>
            <person name="Mattick J.S."/>
            <person name="Hume D.A."/>
            <person name="Kai C."/>
            <person name="Sasaki D."/>
            <person name="Tomaru Y."/>
            <person name="Fukuda S."/>
            <person name="Kanamori-Katayama M."/>
            <person name="Suzuki M."/>
            <person name="Aoki J."/>
            <person name="Arakawa T."/>
            <person name="Iida J."/>
            <person name="Imamura K."/>
            <person name="Itoh M."/>
            <person name="Kato T."/>
            <person name="Kawaji H."/>
            <person name="Kawagashira N."/>
            <person name="Kawashima T."/>
            <person name="Kojima M."/>
            <person name="Kondo S."/>
            <person name="Konno H."/>
            <person name="Nakano K."/>
            <person name="Ninomiya N."/>
            <person name="Nishio T."/>
            <person name="Okada M."/>
            <person name="Plessy C."/>
            <person name="Shibata K."/>
            <person name="Shiraki T."/>
            <person name="Suzuki S."/>
            <person name="Tagami M."/>
            <person name="Waki K."/>
            <person name="Watahiki A."/>
            <person name="Okamura-Oho Y."/>
            <person name="Suzuki H."/>
            <person name="Kawai J."/>
            <person name="Hayashizaki Y."/>
        </authorList>
    </citation>
    <scope>NUCLEOTIDE SEQUENCE [LARGE SCALE MRNA]</scope>
    <source>
        <strain>C57BL/6J</strain>
        <tissue>Eye</tissue>
        <tissue>Olfactory bulb</tissue>
    </source>
</reference>
<reference key="2">
    <citation type="journal article" date="2004" name="Genome Res.">
        <title>The status, quality, and expansion of the NIH full-length cDNA project: the Mammalian Gene Collection (MGC).</title>
        <authorList>
            <consortium name="The MGC Project Team"/>
        </authorList>
    </citation>
    <scope>NUCLEOTIDE SEQUENCE [LARGE SCALE MRNA]</scope>
    <source>
        <strain>C57BL/6J</strain>
        <tissue>Retina</tissue>
    </source>
</reference>
<reference key="3">
    <citation type="journal article" date="2022" name="Science">
        <title>Lysosomal enzyme trafficking factor LYSET enables nutritional usage of extracellular proteins.</title>
        <authorList>
            <person name="Pechincha C."/>
            <person name="Groessl S."/>
            <person name="Kalis R."/>
            <person name="de Almeida M."/>
            <person name="Zanotti A."/>
            <person name="Wittmann M."/>
            <person name="Schneider M."/>
            <person name="de Campos R.P."/>
            <person name="Rieser S."/>
            <person name="Brandstetter M."/>
            <person name="Schleiffer A."/>
            <person name="Mueller-Decker K."/>
            <person name="Helm D."/>
            <person name="Jabs S."/>
            <person name="Haselbach D."/>
            <person name="Lemberg M.K."/>
            <person name="Zuber J."/>
            <person name="Palm W."/>
        </authorList>
    </citation>
    <scope>FUNCTION</scope>
</reference>
<reference key="4">
    <citation type="journal article" date="2022" name="Science">
        <title>The human disease gene LYSET is essential for lysosomal enzyme transport and viral infection.</title>
        <authorList>
            <person name="Richards C.M."/>
            <person name="Jabs S."/>
            <person name="Qiao W."/>
            <person name="Varanese L.D."/>
            <person name="Schweizer M."/>
            <person name="Mosen P.R."/>
            <person name="Riley N.M."/>
            <person name="Kluessendorf M."/>
            <person name="Zengel J.R."/>
            <person name="Flynn R.A."/>
            <person name="Rustagi A."/>
            <person name="Widen J.C."/>
            <person name="Peters C.E."/>
            <person name="Ooi Y.S."/>
            <person name="Xie X."/>
            <person name="Shi P.Y."/>
            <person name="Bartenschlager R."/>
            <person name="Puschnik A.S."/>
            <person name="Bogyo M."/>
            <person name="Bertozzi C.R."/>
            <person name="Blish C.A."/>
            <person name="Winter D."/>
            <person name="Nagamine C.M."/>
            <person name="Braulke T."/>
            <person name="Carette J.E."/>
        </authorList>
    </citation>
    <scope>DISRUPTION PHENOTYPE</scope>
    <scope>FUNCTION</scope>
</reference>